<protein>
    <recommendedName>
        <fullName evidence="1">Gamma-glutamyl phosphate reductase</fullName>
        <shortName evidence="1">GPR</shortName>
        <ecNumber evidence="1">1.2.1.41</ecNumber>
    </recommendedName>
    <alternativeName>
        <fullName evidence="1">Glutamate-5-semialdehyde dehydrogenase</fullName>
    </alternativeName>
    <alternativeName>
        <fullName evidence="1">Glutamyl-gamma-semialdehyde dehydrogenase</fullName>
        <shortName evidence="1">GSA dehydrogenase</shortName>
    </alternativeName>
</protein>
<keyword id="KW-0028">Amino-acid biosynthesis</keyword>
<keyword id="KW-0963">Cytoplasm</keyword>
<keyword id="KW-0521">NADP</keyword>
<keyword id="KW-0560">Oxidoreductase</keyword>
<keyword id="KW-0641">Proline biosynthesis</keyword>
<keyword id="KW-1185">Reference proteome</keyword>
<feature type="chain" id="PRO_0000340903" description="Gamma-glutamyl phosphate reductase">
    <location>
        <begin position="1"/>
        <end position="434"/>
    </location>
</feature>
<proteinExistence type="inferred from homology"/>
<organism>
    <name type="scientific">Pelotomaculum thermopropionicum (strain DSM 13744 / JCM 10971 / SI)</name>
    <dbReference type="NCBI Taxonomy" id="370438"/>
    <lineage>
        <taxon>Bacteria</taxon>
        <taxon>Bacillati</taxon>
        <taxon>Bacillota</taxon>
        <taxon>Clostridia</taxon>
        <taxon>Eubacteriales</taxon>
        <taxon>Desulfotomaculaceae</taxon>
        <taxon>Pelotomaculum</taxon>
    </lineage>
</organism>
<evidence type="ECO:0000255" key="1">
    <source>
        <dbReference type="HAMAP-Rule" id="MF_00412"/>
    </source>
</evidence>
<sequence>MDMNELARRVKEASIVLASAGTELKNRALAQIARSLQDGREEIIRANREDLLRSEKENLPGPLLKRLKFDEAKIQEVIEGIHSLIELEDPVGRTLLSTELDDGLELYKVTCPIGVIGVIFESRPDALVQISTLCLKSGNGVLLKGGSEARETNRVLAAIIAGATHKAGLPPDWIALLETRSDVGEMLKMDKYIDLIIPRGSNEFVRYIMDNSRIPVLGHADGICHLYVDEDADIQMAVKIAVDAKTQYVAVCNAVETLLVHEKIAPAFLPELKKAMDARQVELIGCPRTRAVIPAAPATEEDWRTEYLDLKLSVKVVAGLDEAIGHINTYGSGHTDGIITRSGEKAARFMDYVDSGNVFWNCSTRFSDGFRYGFGAEVGISTSKVHARGPVGLDGLVIYKYRLIGNGHIVGDYAGRLKTFKHRKMNKDYGIVTK</sequence>
<accession>A5CZ28</accession>
<reference key="1">
    <citation type="journal article" date="2008" name="Genome Res.">
        <title>The genome of Pelotomaculum thermopropionicum reveals niche-associated evolution in anaerobic microbiota.</title>
        <authorList>
            <person name="Kosaka T."/>
            <person name="Kato S."/>
            <person name="Shimoyama T."/>
            <person name="Ishii S."/>
            <person name="Abe T."/>
            <person name="Watanabe K."/>
        </authorList>
    </citation>
    <scope>NUCLEOTIDE SEQUENCE [LARGE SCALE GENOMIC DNA]</scope>
    <source>
        <strain>DSM 13744 / JCM 10971 / SI</strain>
    </source>
</reference>
<name>PROA_PELTS</name>
<gene>
    <name evidence="1" type="primary">proA</name>
    <name type="ordered locus">PTH_2594</name>
</gene>
<comment type="function">
    <text evidence="1">Catalyzes the NADPH-dependent reduction of L-glutamate 5-phosphate into L-glutamate 5-semialdehyde and phosphate. The product spontaneously undergoes cyclization to form 1-pyrroline-5-carboxylate.</text>
</comment>
<comment type="catalytic activity">
    <reaction evidence="1">
        <text>L-glutamate 5-semialdehyde + phosphate + NADP(+) = L-glutamyl 5-phosphate + NADPH + H(+)</text>
        <dbReference type="Rhea" id="RHEA:19541"/>
        <dbReference type="ChEBI" id="CHEBI:15378"/>
        <dbReference type="ChEBI" id="CHEBI:43474"/>
        <dbReference type="ChEBI" id="CHEBI:57783"/>
        <dbReference type="ChEBI" id="CHEBI:58066"/>
        <dbReference type="ChEBI" id="CHEBI:58274"/>
        <dbReference type="ChEBI" id="CHEBI:58349"/>
        <dbReference type="EC" id="1.2.1.41"/>
    </reaction>
</comment>
<comment type="pathway">
    <text evidence="1">Amino-acid biosynthesis; L-proline biosynthesis; L-glutamate 5-semialdehyde from L-glutamate: step 2/2.</text>
</comment>
<comment type="subcellular location">
    <subcellularLocation>
        <location evidence="1">Cytoplasm</location>
    </subcellularLocation>
</comment>
<comment type="similarity">
    <text evidence="1">Belongs to the gamma-glutamyl phosphate reductase family.</text>
</comment>
<dbReference type="EC" id="1.2.1.41" evidence="1"/>
<dbReference type="EMBL" id="AP009389">
    <property type="protein sequence ID" value="BAF60775.1"/>
    <property type="molecule type" value="Genomic_DNA"/>
</dbReference>
<dbReference type="SMR" id="A5CZ28"/>
<dbReference type="STRING" id="370438.PTH_2594"/>
<dbReference type="KEGG" id="pth:PTH_2594"/>
<dbReference type="eggNOG" id="COG0014">
    <property type="taxonomic scope" value="Bacteria"/>
</dbReference>
<dbReference type="HOGENOM" id="CLU_030231_0_1_9"/>
<dbReference type="UniPathway" id="UPA00098">
    <property type="reaction ID" value="UER00360"/>
</dbReference>
<dbReference type="Proteomes" id="UP000006556">
    <property type="component" value="Chromosome"/>
</dbReference>
<dbReference type="GO" id="GO:0005737">
    <property type="term" value="C:cytoplasm"/>
    <property type="evidence" value="ECO:0007669"/>
    <property type="project" value="UniProtKB-SubCell"/>
</dbReference>
<dbReference type="GO" id="GO:0004350">
    <property type="term" value="F:glutamate-5-semialdehyde dehydrogenase activity"/>
    <property type="evidence" value="ECO:0007669"/>
    <property type="project" value="UniProtKB-UniRule"/>
</dbReference>
<dbReference type="GO" id="GO:0050661">
    <property type="term" value="F:NADP binding"/>
    <property type="evidence" value="ECO:0007669"/>
    <property type="project" value="InterPro"/>
</dbReference>
<dbReference type="GO" id="GO:0055129">
    <property type="term" value="P:L-proline biosynthetic process"/>
    <property type="evidence" value="ECO:0007669"/>
    <property type="project" value="UniProtKB-UniRule"/>
</dbReference>
<dbReference type="CDD" id="cd07079">
    <property type="entry name" value="ALDH_F18-19_ProA-GPR"/>
    <property type="match status" value="1"/>
</dbReference>
<dbReference type="FunFam" id="3.40.309.10:FF:000006">
    <property type="entry name" value="Gamma-glutamyl phosphate reductase"/>
    <property type="match status" value="1"/>
</dbReference>
<dbReference type="Gene3D" id="3.40.605.10">
    <property type="entry name" value="Aldehyde Dehydrogenase, Chain A, domain 1"/>
    <property type="match status" value="1"/>
</dbReference>
<dbReference type="Gene3D" id="3.40.309.10">
    <property type="entry name" value="Aldehyde Dehydrogenase, Chain A, domain 2"/>
    <property type="match status" value="1"/>
</dbReference>
<dbReference type="HAMAP" id="MF_00412">
    <property type="entry name" value="ProA"/>
    <property type="match status" value="1"/>
</dbReference>
<dbReference type="InterPro" id="IPR016161">
    <property type="entry name" value="Ald_DH/histidinol_DH"/>
</dbReference>
<dbReference type="InterPro" id="IPR016163">
    <property type="entry name" value="Ald_DH_C"/>
</dbReference>
<dbReference type="InterPro" id="IPR016162">
    <property type="entry name" value="Ald_DH_N"/>
</dbReference>
<dbReference type="InterPro" id="IPR015590">
    <property type="entry name" value="Aldehyde_DH_dom"/>
</dbReference>
<dbReference type="InterPro" id="IPR020593">
    <property type="entry name" value="G-glutamylP_reductase_CS"/>
</dbReference>
<dbReference type="InterPro" id="IPR012134">
    <property type="entry name" value="Glu-5-SA_DH"/>
</dbReference>
<dbReference type="InterPro" id="IPR000965">
    <property type="entry name" value="GPR_dom"/>
</dbReference>
<dbReference type="NCBIfam" id="NF001221">
    <property type="entry name" value="PRK00197.1"/>
    <property type="match status" value="1"/>
</dbReference>
<dbReference type="NCBIfam" id="TIGR00407">
    <property type="entry name" value="proA"/>
    <property type="match status" value="1"/>
</dbReference>
<dbReference type="PANTHER" id="PTHR11063:SF8">
    <property type="entry name" value="DELTA-1-PYRROLINE-5-CARBOXYLATE SYNTHASE"/>
    <property type="match status" value="1"/>
</dbReference>
<dbReference type="PANTHER" id="PTHR11063">
    <property type="entry name" value="GLUTAMATE SEMIALDEHYDE DEHYDROGENASE"/>
    <property type="match status" value="1"/>
</dbReference>
<dbReference type="Pfam" id="PF00171">
    <property type="entry name" value="Aldedh"/>
    <property type="match status" value="1"/>
</dbReference>
<dbReference type="PIRSF" id="PIRSF000151">
    <property type="entry name" value="GPR"/>
    <property type="match status" value="1"/>
</dbReference>
<dbReference type="SUPFAM" id="SSF53720">
    <property type="entry name" value="ALDH-like"/>
    <property type="match status" value="1"/>
</dbReference>
<dbReference type="PROSITE" id="PS01223">
    <property type="entry name" value="PROA"/>
    <property type="match status" value="1"/>
</dbReference>